<gene>
    <name type="primary">REM22</name>
    <name type="ordered locus">At3g46770</name>
    <name type="ORF">T6H20.200</name>
</gene>
<dbReference type="EMBL" id="AL096859">
    <property type="protein sequence ID" value="CAB51188.1"/>
    <property type="molecule type" value="Genomic_DNA"/>
</dbReference>
<dbReference type="EMBL" id="CP002686">
    <property type="protein sequence ID" value="AEE78202.1"/>
    <property type="molecule type" value="Genomic_DNA"/>
</dbReference>
<dbReference type="EMBL" id="CP002686">
    <property type="protein sequence ID" value="AEE78203.1"/>
    <property type="molecule type" value="Genomic_DNA"/>
</dbReference>
<dbReference type="PIR" id="T12971">
    <property type="entry name" value="T12971"/>
</dbReference>
<dbReference type="RefSeq" id="NP_001078253.1">
    <molecule id="Q9STF1-2"/>
    <property type="nucleotide sequence ID" value="NM_001084784.2"/>
</dbReference>
<dbReference type="RefSeq" id="NP_190261.1">
    <molecule id="Q9STF1-1"/>
    <property type="nucleotide sequence ID" value="NM_114544.3"/>
</dbReference>
<dbReference type="SMR" id="Q9STF1"/>
<dbReference type="FunCoup" id="Q9STF1">
    <property type="interactions" value="3"/>
</dbReference>
<dbReference type="IntAct" id="Q9STF1">
    <property type="interactions" value="2"/>
</dbReference>
<dbReference type="STRING" id="3702.Q9STF1"/>
<dbReference type="iPTMnet" id="Q9STF1"/>
<dbReference type="PaxDb" id="3702-AT3G46770.1"/>
<dbReference type="ProteomicsDB" id="225953">
    <molecule id="Q9STF1-1"/>
</dbReference>
<dbReference type="EnsemblPlants" id="AT3G46770.1">
    <molecule id="Q9STF1-1"/>
    <property type="protein sequence ID" value="AT3G46770.1"/>
    <property type="gene ID" value="AT3G46770"/>
</dbReference>
<dbReference type="EnsemblPlants" id="AT3G46770.2">
    <molecule id="Q9STF1-2"/>
    <property type="protein sequence ID" value="AT3G46770.2"/>
    <property type="gene ID" value="AT3G46770"/>
</dbReference>
<dbReference type="GeneID" id="823830"/>
<dbReference type="Gramene" id="AT3G46770.1">
    <molecule id="Q9STF1-1"/>
    <property type="protein sequence ID" value="AT3G46770.1"/>
    <property type="gene ID" value="AT3G46770"/>
</dbReference>
<dbReference type="Gramene" id="AT3G46770.2">
    <molecule id="Q9STF1-2"/>
    <property type="protein sequence ID" value="AT3G46770.2"/>
    <property type="gene ID" value="AT3G46770"/>
</dbReference>
<dbReference type="KEGG" id="ath:AT3G46770"/>
<dbReference type="Araport" id="AT3G46770"/>
<dbReference type="TAIR" id="AT3G46770"/>
<dbReference type="InParanoid" id="Q9STF1"/>
<dbReference type="OMA" id="NIWRMEM"/>
<dbReference type="PhylomeDB" id="Q9STF1"/>
<dbReference type="PRO" id="PR:Q9STF1"/>
<dbReference type="Proteomes" id="UP000006548">
    <property type="component" value="Chromosome 3"/>
</dbReference>
<dbReference type="ExpressionAtlas" id="Q9STF1">
    <property type="expression patterns" value="baseline and differential"/>
</dbReference>
<dbReference type="GO" id="GO:0005634">
    <property type="term" value="C:nucleus"/>
    <property type="evidence" value="ECO:0007669"/>
    <property type="project" value="UniProtKB-SubCell"/>
</dbReference>
<dbReference type="GO" id="GO:0003677">
    <property type="term" value="F:DNA binding"/>
    <property type="evidence" value="ECO:0007669"/>
    <property type="project" value="UniProtKB-KW"/>
</dbReference>
<dbReference type="CDD" id="cd10017">
    <property type="entry name" value="B3_DNA"/>
    <property type="match status" value="1"/>
</dbReference>
<dbReference type="Gene3D" id="2.40.330.10">
    <property type="entry name" value="DNA-binding pseudobarrel domain"/>
    <property type="match status" value="1"/>
</dbReference>
<dbReference type="InterPro" id="IPR003340">
    <property type="entry name" value="B3_DNA-bd"/>
</dbReference>
<dbReference type="InterPro" id="IPR015300">
    <property type="entry name" value="DNA-bd_pseudobarrel_sf"/>
</dbReference>
<dbReference type="InterPro" id="IPR050655">
    <property type="entry name" value="Plant_B3_domain"/>
</dbReference>
<dbReference type="PANTHER" id="PTHR31920">
    <property type="entry name" value="B3 DOMAIN-CONTAINING"/>
    <property type="match status" value="1"/>
</dbReference>
<dbReference type="PANTHER" id="PTHR31920:SF32">
    <property type="entry name" value="B3 DOMAIN-CONTAINING PROTEIN REM22"/>
    <property type="match status" value="1"/>
</dbReference>
<dbReference type="Pfam" id="PF02362">
    <property type="entry name" value="B3"/>
    <property type="match status" value="1"/>
</dbReference>
<dbReference type="SMART" id="SM01019">
    <property type="entry name" value="B3"/>
    <property type="match status" value="1"/>
</dbReference>
<dbReference type="SUPFAM" id="SSF101936">
    <property type="entry name" value="DNA-binding pseudobarrel domain"/>
    <property type="match status" value="2"/>
</dbReference>
<dbReference type="PROSITE" id="PS50863">
    <property type="entry name" value="B3"/>
    <property type="match status" value="1"/>
</dbReference>
<reference key="1">
    <citation type="journal article" date="2000" name="Nature">
        <title>Sequence and analysis of chromosome 3 of the plant Arabidopsis thaliana.</title>
        <authorList>
            <person name="Salanoubat M."/>
            <person name="Lemcke K."/>
            <person name="Rieger M."/>
            <person name="Ansorge W."/>
            <person name="Unseld M."/>
            <person name="Fartmann B."/>
            <person name="Valle G."/>
            <person name="Bloecker H."/>
            <person name="Perez-Alonso M."/>
            <person name="Obermaier B."/>
            <person name="Delseny M."/>
            <person name="Boutry M."/>
            <person name="Grivell L.A."/>
            <person name="Mache R."/>
            <person name="Puigdomenech P."/>
            <person name="De Simone V."/>
            <person name="Choisne N."/>
            <person name="Artiguenave F."/>
            <person name="Robert C."/>
            <person name="Brottier P."/>
            <person name="Wincker P."/>
            <person name="Cattolico L."/>
            <person name="Weissenbach J."/>
            <person name="Saurin W."/>
            <person name="Quetier F."/>
            <person name="Schaefer M."/>
            <person name="Mueller-Auer S."/>
            <person name="Gabel C."/>
            <person name="Fuchs M."/>
            <person name="Benes V."/>
            <person name="Wurmbach E."/>
            <person name="Drzonek H."/>
            <person name="Erfle H."/>
            <person name="Jordan N."/>
            <person name="Bangert S."/>
            <person name="Wiedelmann R."/>
            <person name="Kranz H."/>
            <person name="Voss H."/>
            <person name="Holland R."/>
            <person name="Brandt P."/>
            <person name="Nyakatura G."/>
            <person name="Vezzi A."/>
            <person name="D'Angelo M."/>
            <person name="Pallavicini A."/>
            <person name="Toppo S."/>
            <person name="Simionati B."/>
            <person name="Conrad A."/>
            <person name="Hornischer K."/>
            <person name="Kauer G."/>
            <person name="Loehnert T.-H."/>
            <person name="Nordsiek G."/>
            <person name="Reichelt J."/>
            <person name="Scharfe M."/>
            <person name="Schoen O."/>
            <person name="Bargues M."/>
            <person name="Terol J."/>
            <person name="Climent J."/>
            <person name="Navarro P."/>
            <person name="Collado C."/>
            <person name="Perez-Perez A."/>
            <person name="Ottenwaelder B."/>
            <person name="Duchemin D."/>
            <person name="Cooke R."/>
            <person name="Laudie M."/>
            <person name="Berger-Llauro C."/>
            <person name="Purnelle B."/>
            <person name="Masuy D."/>
            <person name="de Haan M."/>
            <person name="Maarse A.C."/>
            <person name="Alcaraz J.-P."/>
            <person name="Cottet A."/>
            <person name="Casacuberta E."/>
            <person name="Monfort A."/>
            <person name="Argiriou A."/>
            <person name="Flores M."/>
            <person name="Liguori R."/>
            <person name="Vitale D."/>
            <person name="Mannhaupt G."/>
            <person name="Haase D."/>
            <person name="Schoof H."/>
            <person name="Rudd S."/>
            <person name="Zaccaria P."/>
            <person name="Mewes H.-W."/>
            <person name="Mayer K.F.X."/>
            <person name="Kaul S."/>
            <person name="Town C.D."/>
            <person name="Koo H.L."/>
            <person name="Tallon L.J."/>
            <person name="Jenkins J."/>
            <person name="Rooney T."/>
            <person name="Rizzo M."/>
            <person name="Walts A."/>
            <person name="Utterback T."/>
            <person name="Fujii C.Y."/>
            <person name="Shea T.P."/>
            <person name="Creasy T.H."/>
            <person name="Haas B."/>
            <person name="Maiti R."/>
            <person name="Wu D."/>
            <person name="Peterson J."/>
            <person name="Van Aken S."/>
            <person name="Pai G."/>
            <person name="Militscher J."/>
            <person name="Sellers P."/>
            <person name="Gill J.E."/>
            <person name="Feldblyum T.V."/>
            <person name="Preuss D."/>
            <person name="Lin X."/>
            <person name="Nierman W.C."/>
            <person name="Salzberg S.L."/>
            <person name="White O."/>
            <person name="Venter J.C."/>
            <person name="Fraser C.M."/>
            <person name="Kaneko T."/>
            <person name="Nakamura Y."/>
            <person name="Sato S."/>
            <person name="Kato T."/>
            <person name="Asamizu E."/>
            <person name="Sasamoto S."/>
            <person name="Kimura T."/>
            <person name="Idesawa K."/>
            <person name="Kawashima K."/>
            <person name="Kishida Y."/>
            <person name="Kiyokawa C."/>
            <person name="Kohara M."/>
            <person name="Matsumoto M."/>
            <person name="Matsuno A."/>
            <person name="Muraki A."/>
            <person name="Nakayama S."/>
            <person name="Nakazaki N."/>
            <person name="Shinpo S."/>
            <person name="Takeuchi C."/>
            <person name="Wada T."/>
            <person name="Watanabe A."/>
            <person name="Yamada M."/>
            <person name="Yasuda M."/>
            <person name="Tabata S."/>
        </authorList>
    </citation>
    <scope>NUCLEOTIDE SEQUENCE [LARGE SCALE GENOMIC DNA]</scope>
    <source>
        <strain>cv. Columbia</strain>
    </source>
</reference>
<reference key="2">
    <citation type="journal article" date="2017" name="Plant J.">
        <title>Araport11: a complete reannotation of the Arabidopsis thaliana reference genome.</title>
        <authorList>
            <person name="Cheng C.Y."/>
            <person name="Krishnakumar V."/>
            <person name="Chan A.P."/>
            <person name="Thibaud-Nissen F."/>
            <person name="Schobel S."/>
            <person name="Town C.D."/>
        </authorList>
    </citation>
    <scope>GENOME REANNOTATION</scope>
    <source>
        <strain>cv. Columbia</strain>
    </source>
</reference>
<reference key="3">
    <citation type="journal article" date="2008" name="Trends Plant Sci.">
        <title>The plant B3 superfamily.</title>
        <authorList>
            <person name="Swaminathan K."/>
            <person name="Peterson K."/>
            <person name="Jack T."/>
        </authorList>
    </citation>
    <scope>GENE FAMILY</scope>
</reference>
<sequence>MEENSSKKKLSETMSIQDTVLKFFRVYIPNQTADDMNLPLVSDKISGKPLPRKVTVKSVSSGNIWRMEMKANGNTVFLRDGWKKIVKDENVTEPIFLEFEFDGYGVFHFCVYEYGSMCKRMRSPMEKEVIKVDSEEDVLVGNEESTKGLEESPRRGGTSRRRAKLKTKSHKIYEHLDNKLNPSFPVDMTQNRTRIPSLLIKDYNLTFPNMVIMRDKIGILKRRIVIWKNRSVYLNGIGSIIRRNHVKPGNEVVFELKMVNGYHGLVHEIKVHIIKA</sequence>
<organism>
    <name type="scientific">Arabidopsis thaliana</name>
    <name type="common">Mouse-ear cress</name>
    <dbReference type="NCBI Taxonomy" id="3702"/>
    <lineage>
        <taxon>Eukaryota</taxon>
        <taxon>Viridiplantae</taxon>
        <taxon>Streptophyta</taxon>
        <taxon>Embryophyta</taxon>
        <taxon>Tracheophyta</taxon>
        <taxon>Spermatophyta</taxon>
        <taxon>Magnoliopsida</taxon>
        <taxon>eudicotyledons</taxon>
        <taxon>Gunneridae</taxon>
        <taxon>Pentapetalae</taxon>
        <taxon>rosids</taxon>
        <taxon>malvids</taxon>
        <taxon>Brassicales</taxon>
        <taxon>Brassicaceae</taxon>
        <taxon>Camelineae</taxon>
        <taxon>Arabidopsis</taxon>
    </lineage>
</organism>
<comment type="subcellular location">
    <subcellularLocation>
        <location evidence="1">Nucleus</location>
    </subcellularLocation>
</comment>
<comment type="alternative products">
    <event type="alternative splicing"/>
    <isoform>
        <id>Q9STF1-1</id>
        <name>1</name>
        <sequence type="displayed"/>
    </isoform>
    <isoform>
        <id>Q9STF1-2</id>
        <name>2</name>
        <sequence type="described" ref="VSP_037328"/>
    </isoform>
</comment>
<feature type="chain" id="PRO_0000375115" description="B3 domain-containing protein REM22">
    <location>
        <begin position="1"/>
        <end position="276"/>
    </location>
</feature>
<feature type="DNA-binding region" description="TF-B3" evidence="1">
    <location>
        <begin position="11"/>
        <end position="115"/>
    </location>
</feature>
<feature type="region of interest" description="Disordered" evidence="2">
    <location>
        <begin position="141"/>
        <end position="164"/>
    </location>
</feature>
<feature type="compositionally biased region" description="Basic and acidic residues" evidence="2">
    <location>
        <begin position="144"/>
        <end position="154"/>
    </location>
</feature>
<feature type="splice variant" id="VSP_037328" description="In isoform 2." evidence="3">
    <location>
        <begin position="1"/>
        <end position="66"/>
    </location>
</feature>
<evidence type="ECO:0000255" key="1">
    <source>
        <dbReference type="PROSITE-ProRule" id="PRU00326"/>
    </source>
</evidence>
<evidence type="ECO:0000256" key="2">
    <source>
        <dbReference type="SAM" id="MobiDB-lite"/>
    </source>
</evidence>
<evidence type="ECO:0000305" key="3"/>
<accession>Q9STF1</accession>
<accession>A8MSE6</accession>
<protein>
    <recommendedName>
        <fullName>B3 domain-containing protein REM22</fullName>
    </recommendedName>
    <alternativeName>
        <fullName>Protein REPRODUCTIVE MERISTEM 22</fullName>
    </alternativeName>
</protein>
<keyword id="KW-0025">Alternative splicing</keyword>
<keyword id="KW-0238">DNA-binding</keyword>
<keyword id="KW-0539">Nucleus</keyword>
<keyword id="KW-1185">Reference proteome</keyword>
<keyword id="KW-0804">Transcription</keyword>
<keyword id="KW-0805">Transcription regulation</keyword>
<proteinExistence type="inferred from homology"/>
<name>REM22_ARATH</name>